<accession>B4T4Z4</accession>
<proteinExistence type="inferred from homology"/>
<protein>
    <recommendedName>
        <fullName evidence="1">Phosphatidylglycerol--prolipoprotein diacylglyceryl transferase</fullName>
        <ecNumber evidence="1">2.5.1.145</ecNumber>
    </recommendedName>
</protein>
<comment type="function">
    <text evidence="1">Catalyzes the transfer of the diacylglyceryl group from phosphatidylglycerol to the sulfhydryl group of the N-terminal cysteine of a prolipoprotein, the first step in the formation of mature lipoproteins.</text>
</comment>
<comment type="catalytic activity">
    <reaction evidence="1">
        <text>L-cysteinyl-[prolipoprotein] + a 1,2-diacyl-sn-glycero-3-phospho-(1'-sn-glycerol) = an S-1,2-diacyl-sn-glyceryl-L-cysteinyl-[prolipoprotein] + sn-glycerol 1-phosphate + H(+)</text>
        <dbReference type="Rhea" id="RHEA:56712"/>
        <dbReference type="Rhea" id="RHEA-COMP:14679"/>
        <dbReference type="Rhea" id="RHEA-COMP:14680"/>
        <dbReference type="ChEBI" id="CHEBI:15378"/>
        <dbReference type="ChEBI" id="CHEBI:29950"/>
        <dbReference type="ChEBI" id="CHEBI:57685"/>
        <dbReference type="ChEBI" id="CHEBI:64716"/>
        <dbReference type="ChEBI" id="CHEBI:140658"/>
        <dbReference type="EC" id="2.5.1.145"/>
    </reaction>
</comment>
<comment type="pathway">
    <text evidence="1">Protein modification; lipoprotein biosynthesis (diacylglyceryl transfer).</text>
</comment>
<comment type="subcellular location">
    <subcellularLocation>
        <location evidence="1">Cell inner membrane</location>
        <topology evidence="1">Multi-pass membrane protein</topology>
    </subcellularLocation>
</comment>
<comment type="similarity">
    <text evidence="1">Belongs to the Lgt family.</text>
</comment>
<gene>
    <name evidence="1" type="primary">lgt</name>
    <name type="ordered locus">SNSL254_A3229</name>
</gene>
<sequence length="291" mass="33074">MTSSYLHFPDFDPVIFSIGPVALHWYGLMYLVGFVFAMWLAVRRANRPGSGWTKNEVENLLYAGFLGVFLGGRIGYVLFYNFPLFLDNPLYLFRVWDGGMSFHGGLIGVILVMIIFARRTKRSFFQVSDFIAPLIPFGLGAGRLGNFINGELWGRVDPNFRFAMLFPGSRAEDIALLPSHPQWQPIFDTYGVLPRHPSQLYELALEGVVLFIILNLFIRKPRPMGAVSGLFLIGYGAFRIIVEFFRQPDAQFTGAWVQYISMGQILSIPMIIAGAIMMVWAYRRRPQQHVS</sequence>
<reference key="1">
    <citation type="journal article" date="2011" name="J. Bacteriol.">
        <title>Comparative genomics of 28 Salmonella enterica isolates: evidence for CRISPR-mediated adaptive sublineage evolution.</title>
        <authorList>
            <person name="Fricke W.F."/>
            <person name="Mammel M.K."/>
            <person name="McDermott P.F."/>
            <person name="Tartera C."/>
            <person name="White D.G."/>
            <person name="Leclerc J.E."/>
            <person name="Ravel J."/>
            <person name="Cebula T.A."/>
        </authorList>
    </citation>
    <scope>NUCLEOTIDE SEQUENCE [LARGE SCALE GENOMIC DNA]</scope>
    <source>
        <strain>SL254</strain>
    </source>
</reference>
<dbReference type="EC" id="2.5.1.145" evidence="1"/>
<dbReference type="EMBL" id="CP001113">
    <property type="protein sequence ID" value="ACF63110.1"/>
    <property type="molecule type" value="Genomic_DNA"/>
</dbReference>
<dbReference type="RefSeq" id="WP_000204647.1">
    <property type="nucleotide sequence ID" value="NZ_CCMR01000001.1"/>
</dbReference>
<dbReference type="SMR" id="B4T4Z4"/>
<dbReference type="KEGG" id="see:SNSL254_A3229"/>
<dbReference type="HOGENOM" id="CLU_013386_1_0_6"/>
<dbReference type="UniPathway" id="UPA00664"/>
<dbReference type="Proteomes" id="UP000008824">
    <property type="component" value="Chromosome"/>
</dbReference>
<dbReference type="GO" id="GO:0005886">
    <property type="term" value="C:plasma membrane"/>
    <property type="evidence" value="ECO:0007669"/>
    <property type="project" value="UniProtKB-SubCell"/>
</dbReference>
<dbReference type="GO" id="GO:0008961">
    <property type="term" value="F:phosphatidylglycerol-prolipoprotein diacylglyceryl transferase activity"/>
    <property type="evidence" value="ECO:0007669"/>
    <property type="project" value="UniProtKB-UniRule"/>
</dbReference>
<dbReference type="GO" id="GO:0042158">
    <property type="term" value="P:lipoprotein biosynthetic process"/>
    <property type="evidence" value="ECO:0007669"/>
    <property type="project" value="UniProtKB-UniRule"/>
</dbReference>
<dbReference type="HAMAP" id="MF_01147">
    <property type="entry name" value="Lgt"/>
    <property type="match status" value="1"/>
</dbReference>
<dbReference type="InterPro" id="IPR001640">
    <property type="entry name" value="Lgt"/>
</dbReference>
<dbReference type="NCBIfam" id="TIGR00544">
    <property type="entry name" value="lgt"/>
    <property type="match status" value="1"/>
</dbReference>
<dbReference type="PANTHER" id="PTHR30589:SF0">
    <property type="entry name" value="PHOSPHATIDYLGLYCEROL--PROLIPOPROTEIN DIACYLGLYCERYL TRANSFERASE"/>
    <property type="match status" value="1"/>
</dbReference>
<dbReference type="PANTHER" id="PTHR30589">
    <property type="entry name" value="PROLIPOPROTEIN DIACYLGLYCERYL TRANSFERASE"/>
    <property type="match status" value="1"/>
</dbReference>
<dbReference type="Pfam" id="PF01790">
    <property type="entry name" value="LGT"/>
    <property type="match status" value="1"/>
</dbReference>
<dbReference type="PROSITE" id="PS01311">
    <property type="entry name" value="LGT"/>
    <property type="match status" value="1"/>
</dbReference>
<evidence type="ECO:0000255" key="1">
    <source>
        <dbReference type="HAMAP-Rule" id="MF_01147"/>
    </source>
</evidence>
<feature type="chain" id="PRO_1000137456" description="Phosphatidylglycerol--prolipoprotein diacylglyceryl transferase">
    <location>
        <begin position="1"/>
        <end position="291"/>
    </location>
</feature>
<feature type="transmembrane region" description="Helical" evidence="1">
    <location>
        <begin position="21"/>
        <end position="41"/>
    </location>
</feature>
<feature type="transmembrane region" description="Helical" evidence="1">
    <location>
        <begin position="60"/>
        <end position="80"/>
    </location>
</feature>
<feature type="transmembrane region" description="Helical" evidence="1">
    <location>
        <begin position="96"/>
        <end position="116"/>
    </location>
</feature>
<feature type="transmembrane region" description="Helical" evidence="1">
    <location>
        <begin position="130"/>
        <end position="150"/>
    </location>
</feature>
<feature type="transmembrane region" description="Helical" evidence="1">
    <location>
        <begin position="198"/>
        <end position="218"/>
    </location>
</feature>
<feature type="transmembrane region" description="Helical" evidence="1">
    <location>
        <begin position="225"/>
        <end position="245"/>
    </location>
</feature>
<feature type="transmembrane region" description="Helical" evidence="1">
    <location>
        <begin position="260"/>
        <end position="280"/>
    </location>
</feature>
<feature type="binding site" evidence="1">
    <location>
        <position position="143"/>
    </location>
    <ligand>
        <name>a 1,2-diacyl-sn-glycero-3-phospho-(1'-sn-glycerol)</name>
        <dbReference type="ChEBI" id="CHEBI:64716"/>
    </ligand>
</feature>
<organism>
    <name type="scientific">Salmonella newport (strain SL254)</name>
    <dbReference type="NCBI Taxonomy" id="423368"/>
    <lineage>
        <taxon>Bacteria</taxon>
        <taxon>Pseudomonadati</taxon>
        <taxon>Pseudomonadota</taxon>
        <taxon>Gammaproteobacteria</taxon>
        <taxon>Enterobacterales</taxon>
        <taxon>Enterobacteriaceae</taxon>
        <taxon>Salmonella</taxon>
    </lineage>
</organism>
<keyword id="KW-0997">Cell inner membrane</keyword>
<keyword id="KW-1003">Cell membrane</keyword>
<keyword id="KW-0472">Membrane</keyword>
<keyword id="KW-0808">Transferase</keyword>
<keyword id="KW-0812">Transmembrane</keyword>
<keyword id="KW-1133">Transmembrane helix</keyword>
<name>LGT_SALNS</name>